<comment type="function">
    <text evidence="5">Probable neurotoxin with ion channel inhibitor activity.</text>
</comment>
<comment type="subcellular location">
    <subcellularLocation>
        <location evidence="3">Secreted</location>
    </subcellularLocation>
</comment>
<comment type="tissue specificity">
    <text evidence="5">Expressed by the venom duct.</text>
</comment>
<comment type="domain">
    <text evidence="5">The cysteine framework is IV (CC-C-C-C-C).</text>
</comment>
<comment type="PTM">
    <text evidence="1">O-linked glycan consists of Hex4-HexNAc2 hexasaccharide.</text>
</comment>
<comment type="PTM">
    <text evidence="1">Contains 3 disulfide bonds.</text>
</comment>
<comment type="mass spectrometry" mass="5095.3" method="LSI" evidence="3"/>
<comment type="similarity">
    <text evidence="5">Belongs to the conotoxin A superfamily.</text>
</comment>
<protein>
    <recommendedName>
        <fullName evidence="4">Conotoxin MIVA</fullName>
    </recommendedName>
    <alternativeName>
        <fullName evidence="4">KappaA-conotoxin</fullName>
    </alternativeName>
</protein>
<evidence type="ECO:0000250" key="1">
    <source>
        <dbReference type="UniProtKB" id="P0DQY7"/>
    </source>
</evidence>
<evidence type="ECO:0000255" key="2"/>
<evidence type="ECO:0000269" key="3">
    <source>
    </source>
</evidence>
<evidence type="ECO:0000303" key="4">
    <source>
    </source>
</evidence>
<evidence type="ECO:0000305" key="5"/>
<evidence type="ECO:0000305" key="6">
    <source>
    </source>
</evidence>
<sequence length="79" mass="8680">MGMRMMFTVFLLVVLATTVVSIPSDRASDGRNAVVHERAPELVVTATTNCCGYNPMTICPPCMCTYSCPPKRKPGRRND</sequence>
<reference key="1">
    <citation type="journal article" date="2004" name="J. Biol. Chem.">
        <title>The A-superfamily of conotoxins: structural and functional divergence.</title>
        <authorList>
            <person name="Santos A.D."/>
            <person name="McIntosh J.M."/>
            <person name="Hillyard D.R."/>
            <person name="Cruz L.J."/>
            <person name="Olivera B.M."/>
        </authorList>
    </citation>
    <scope>NUCLEOTIDE SEQUENCE [MRNA]</scope>
    <scope>PROTEIN SEQUENCE OF 39-74</scope>
    <scope>HYDROXYLATION AT PRO-40; PRO-55; PRO-60; PRO-61; PRO-69; PRO-70 AND PRO-74</scope>
    <scope>GLYCOSYLATION AT THR-45 AND THR-47</scope>
    <scope>AMIDATION AT PRO-74</scope>
    <scope>GAMMA-CARBOXYGLUTAMATION AT GLU-41</scope>
    <scope>MASS SPECTROMETRY</scope>
    <scope>SUBCELLULAR LOCATION</scope>
    <source>
        <tissue>Venom</tissue>
        <tissue>Venom duct</tissue>
    </source>
</reference>
<feature type="signal peptide" evidence="2">
    <location>
        <begin position="1"/>
        <end position="21"/>
    </location>
</feature>
<feature type="propeptide" id="PRO_0000249800" evidence="3">
    <location>
        <begin position="22"/>
        <end position="38"/>
    </location>
</feature>
<feature type="peptide" id="PRO_0000249801" description="Conotoxin MIVA" evidence="3">
    <location>
        <begin position="39"/>
        <end position="74"/>
    </location>
</feature>
<feature type="propeptide" id="PRO_0000249802" evidence="6">
    <location>
        <begin position="75"/>
        <end position="79"/>
    </location>
</feature>
<feature type="modified residue" description="4-hydroxyproline" evidence="3">
    <location>
        <position position="40"/>
    </location>
</feature>
<feature type="modified residue" description="4-carboxyglutamate" evidence="3">
    <location>
        <position position="41"/>
    </location>
</feature>
<feature type="modified residue" description="4-hydroxyproline" evidence="3">
    <location>
        <position position="55"/>
    </location>
</feature>
<feature type="modified residue" description="4-hydroxyproline" evidence="3">
    <location>
        <position position="60"/>
    </location>
</feature>
<feature type="modified residue" description="4-hydroxyproline" evidence="3">
    <location>
        <position position="61"/>
    </location>
</feature>
<feature type="modified residue" description="4-hydroxyproline" evidence="3">
    <location>
        <position position="69"/>
    </location>
</feature>
<feature type="modified residue" description="4-hydroxyproline" evidence="3">
    <location>
        <position position="70"/>
    </location>
</feature>
<feature type="modified residue" description="4-hydroxyproline" evidence="3">
    <location>
        <position position="74"/>
    </location>
</feature>
<feature type="modified residue" description="Proline amide" evidence="3">
    <location>
        <position position="74"/>
    </location>
</feature>
<feature type="glycosylation site" description="O-linked (HexNAc...) threonine" evidence="3">
    <location>
        <position position="45"/>
    </location>
</feature>
<feature type="glycosylation site" description="O-linked (HexNAc...) threonine" evidence="3">
    <location>
        <position position="47"/>
    </location>
</feature>
<dbReference type="SMR" id="P0C1X1"/>
<dbReference type="iPTMnet" id="P0C1X1"/>
<dbReference type="ConoServer" id="18">
    <property type="toxin name" value="MIVA precursor"/>
</dbReference>
<dbReference type="GO" id="GO:0005576">
    <property type="term" value="C:extracellular region"/>
    <property type="evidence" value="ECO:0007669"/>
    <property type="project" value="UniProtKB-SubCell"/>
</dbReference>
<dbReference type="GO" id="GO:0030550">
    <property type="term" value="F:acetylcholine receptor inhibitor activity"/>
    <property type="evidence" value="ECO:0007669"/>
    <property type="project" value="InterPro"/>
</dbReference>
<dbReference type="GO" id="GO:0099106">
    <property type="term" value="F:ion channel regulator activity"/>
    <property type="evidence" value="ECO:0007669"/>
    <property type="project" value="UniProtKB-KW"/>
</dbReference>
<dbReference type="GO" id="GO:0090729">
    <property type="term" value="F:toxin activity"/>
    <property type="evidence" value="ECO:0007669"/>
    <property type="project" value="UniProtKB-KW"/>
</dbReference>
<dbReference type="InterPro" id="IPR009958">
    <property type="entry name" value="Conotoxin_a-typ"/>
</dbReference>
<dbReference type="Pfam" id="PF07365">
    <property type="entry name" value="Toxin_8"/>
    <property type="match status" value="1"/>
</dbReference>
<keyword id="KW-0027">Amidation</keyword>
<keyword id="KW-0903">Direct protein sequencing</keyword>
<keyword id="KW-1015">Disulfide bond</keyword>
<keyword id="KW-0301">Gamma-carboxyglutamic acid</keyword>
<keyword id="KW-0325">Glycoprotein</keyword>
<keyword id="KW-0379">Hydroxylation</keyword>
<keyword id="KW-0872">Ion channel impairing toxin</keyword>
<keyword id="KW-0528">Neurotoxin</keyword>
<keyword id="KW-0964">Secreted</keyword>
<keyword id="KW-0732">Signal</keyword>
<keyword id="KW-0800">Toxin</keyword>
<proteinExistence type="evidence at protein level"/>
<name>CA4A_CONMA</name>
<organism>
    <name type="scientific">Conus magus</name>
    <name type="common">Magical cone</name>
    <dbReference type="NCBI Taxonomy" id="6492"/>
    <lineage>
        <taxon>Eukaryota</taxon>
        <taxon>Metazoa</taxon>
        <taxon>Spiralia</taxon>
        <taxon>Lophotrochozoa</taxon>
        <taxon>Mollusca</taxon>
        <taxon>Gastropoda</taxon>
        <taxon>Caenogastropoda</taxon>
        <taxon>Neogastropoda</taxon>
        <taxon>Conoidea</taxon>
        <taxon>Conidae</taxon>
        <taxon>Conus</taxon>
        <taxon>Pionoconus</taxon>
    </lineage>
</organism>
<accession>P0C1X1</accession>